<keyword id="KW-0249">Electron transport</keyword>
<keyword id="KW-0472">Membrane</keyword>
<keyword id="KW-0602">Photosynthesis</keyword>
<keyword id="KW-0604">Photosystem II</keyword>
<keyword id="KW-1185">Reference proteome</keyword>
<keyword id="KW-0732">Signal</keyword>
<keyword id="KW-0793">Thylakoid</keyword>
<keyword id="KW-0813">Transport</keyword>
<gene>
    <name evidence="1" type="primary">psbU</name>
    <name type="ordered locus">Syncc9902_0356</name>
</gene>
<evidence type="ECO:0000255" key="1">
    <source>
        <dbReference type="HAMAP-Rule" id="MF_00589"/>
    </source>
</evidence>
<reference key="1">
    <citation type="submission" date="2005-08" db="EMBL/GenBank/DDBJ databases">
        <title>Complete sequence of Synechococcus sp. CC9902.</title>
        <authorList>
            <person name="Copeland A."/>
            <person name="Lucas S."/>
            <person name="Lapidus A."/>
            <person name="Barry K."/>
            <person name="Detter J.C."/>
            <person name="Glavina T."/>
            <person name="Hammon N."/>
            <person name="Israni S."/>
            <person name="Pitluck S."/>
            <person name="Martinez M."/>
            <person name="Schmutz J."/>
            <person name="Larimer F."/>
            <person name="Land M."/>
            <person name="Kyrpides N."/>
            <person name="Ivanova N."/>
            <person name="Richardson P."/>
        </authorList>
    </citation>
    <scope>NUCLEOTIDE SEQUENCE [LARGE SCALE GENOMIC DNA]</scope>
    <source>
        <strain>CC9902</strain>
    </source>
</reference>
<name>PSBU_SYNS9</name>
<proteinExistence type="inferred from homology"/>
<organism>
    <name type="scientific">Synechococcus sp. (strain CC9902)</name>
    <dbReference type="NCBI Taxonomy" id="316279"/>
    <lineage>
        <taxon>Bacteria</taxon>
        <taxon>Bacillati</taxon>
        <taxon>Cyanobacteriota</taxon>
        <taxon>Cyanophyceae</taxon>
        <taxon>Synechococcales</taxon>
        <taxon>Synechococcaceae</taxon>
        <taxon>Synechococcus</taxon>
    </lineage>
</organism>
<dbReference type="EMBL" id="CP000097">
    <property type="protein sequence ID" value="ABB25328.1"/>
    <property type="molecule type" value="Genomic_DNA"/>
</dbReference>
<dbReference type="RefSeq" id="WP_011359185.1">
    <property type="nucleotide sequence ID" value="NC_007513.1"/>
</dbReference>
<dbReference type="SMR" id="Q3AZZ9"/>
<dbReference type="STRING" id="316279.Syncc9902_0356"/>
<dbReference type="KEGG" id="sye:Syncc9902_0356"/>
<dbReference type="eggNOG" id="COG1555">
    <property type="taxonomic scope" value="Bacteria"/>
</dbReference>
<dbReference type="HOGENOM" id="CLU_141240_1_0_3"/>
<dbReference type="OrthoDB" id="463369at2"/>
<dbReference type="Proteomes" id="UP000002712">
    <property type="component" value="Chromosome"/>
</dbReference>
<dbReference type="GO" id="GO:0019898">
    <property type="term" value="C:extrinsic component of membrane"/>
    <property type="evidence" value="ECO:0007669"/>
    <property type="project" value="InterPro"/>
</dbReference>
<dbReference type="GO" id="GO:0009654">
    <property type="term" value="C:photosystem II oxygen evolving complex"/>
    <property type="evidence" value="ECO:0007669"/>
    <property type="project" value="InterPro"/>
</dbReference>
<dbReference type="GO" id="GO:0031676">
    <property type="term" value="C:plasma membrane-derived thylakoid membrane"/>
    <property type="evidence" value="ECO:0007669"/>
    <property type="project" value="UniProtKB-SubCell"/>
</dbReference>
<dbReference type="GO" id="GO:0015979">
    <property type="term" value="P:photosynthesis"/>
    <property type="evidence" value="ECO:0007669"/>
    <property type="project" value="UniProtKB-UniRule"/>
</dbReference>
<dbReference type="GO" id="GO:0042549">
    <property type="term" value="P:photosystem II stabilization"/>
    <property type="evidence" value="ECO:0007669"/>
    <property type="project" value="InterPro"/>
</dbReference>
<dbReference type="Gene3D" id="1.10.150.320">
    <property type="entry name" value="Photosystem II 12 kDa extrinsic protein"/>
    <property type="match status" value="1"/>
</dbReference>
<dbReference type="HAMAP" id="MF_00589">
    <property type="entry name" value="PSII_PsbU"/>
    <property type="match status" value="1"/>
</dbReference>
<dbReference type="InterPro" id="IPR010527">
    <property type="entry name" value="PSII_PsbU"/>
</dbReference>
<dbReference type="NCBIfam" id="NF002708">
    <property type="entry name" value="PRK02515.1"/>
    <property type="match status" value="1"/>
</dbReference>
<dbReference type="Pfam" id="PF06514">
    <property type="entry name" value="PsbU"/>
    <property type="match status" value="1"/>
</dbReference>
<dbReference type="SUPFAM" id="SSF81585">
    <property type="entry name" value="PsbU/PolX domain-like"/>
    <property type="match status" value="1"/>
</dbReference>
<accession>Q3AZZ9</accession>
<comment type="function">
    <text evidence="1">One of the extrinsic, lumenal subunits of photosystem II (PSII). PSII is a light-driven water plastoquinone oxidoreductase, using light energy to abstract electrons from H(2)O, generating a proton gradient subsequently used for ATP formation. The extrinsic proteins stabilize the structure of photosystem II oxygen-evolving complex (OEC), the ion environment of oxygen evolution and protect the OEC against heat-induced inactivation.</text>
</comment>
<comment type="subunit">
    <text evidence="1">PSII is composed of 1 copy each of membrane proteins PsbA, PsbB, PsbC, PsbD, PsbE, PsbF, PsbH, PsbI, PsbJ, PsbK, PsbL, PsbM, PsbT, PsbX, PsbY, PsbZ, Psb30/Ycf12, peripheral proteins PsbO, CyanoQ (PsbQ), PsbU, PsbV and a large number of cofactors. It forms dimeric complexes.</text>
</comment>
<comment type="subcellular location">
    <subcellularLocation>
        <location evidence="1">Cellular thylakoid membrane</location>
        <topology evidence="1">Peripheral membrane protein</topology>
        <orientation evidence="1">Lumenal side</orientation>
    </subcellularLocation>
</comment>
<comment type="similarity">
    <text evidence="1">Belongs to the PsbU family.</text>
</comment>
<sequence>MKRLLSWLTGALVMAGLLSSLVLPSAVYAEEDLLGKYSGSEIRNVVDDKIAEREGKVDLNNSSVRRFQQFPGMYPTMAGKIVLGGPYNNVDDVLELDLSERQKELFAKYRDNFTVTPPSIALNEGDDRINDG</sequence>
<protein>
    <recommendedName>
        <fullName evidence="1">Photosystem II extrinsic protein U</fullName>
        <shortName evidence="1">PSII-U</shortName>
        <shortName evidence="1">PsbU</shortName>
    </recommendedName>
    <alternativeName>
        <fullName evidence="1">Photosystem II 12 kDa extrinsic protein</fullName>
        <shortName evidence="1">PS II complex 12 kDa extrinsic protein</shortName>
    </alternativeName>
</protein>
<feature type="signal peptide" evidence="1">
    <location>
        <begin position="1"/>
        <end position="29"/>
    </location>
</feature>
<feature type="chain" id="PRO_0000295786" description="Photosystem II extrinsic protein U">
    <location>
        <begin position="30"/>
        <end position="132"/>
    </location>
</feature>